<protein>
    <recommendedName>
        <fullName evidence="1">Monofunctional glycosyltransferase</fullName>
        <shortName evidence="1">MGT</shortName>
        <ecNumber evidence="1">2.4.99.28</ecNumber>
    </recommendedName>
    <alternativeName>
        <fullName evidence="1">Peptidoglycan TGase</fullName>
    </alternativeName>
</protein>
<reference key="1">
    <citation type="journal article" date="2004" name="Proc. Natl. Acad. Sci. U.S.A.">
        <title>Complete genomes of two clinical Staphylococcus aureus strains: evidence for the rapid evolution of virulence and drug resistance.</title>
        <authorList>
            <person name="Holden M.T.G."/>
            <person name="Feil E.J."/>
            <person name="Lindsay J.A."/>
            <person name="Peacock S.J."/>
            <person name="Day N.P.J."/>
            <person name="Enright M.C."/>
            <person name="Foster T.J."/>
            <person name="Moore C.E."/>
            <person name="Hurst L."/>
            <person name="Atkin R."/>
            <person name="Barron A."/>
            <person name="Bason N."/>
            <person name="Bentley S.D."/>
            <person name="Chillingworth C."/>
            <person name="Chillingworth T."/>
            <person name="Churcher C."/>
            <person name="Clark L."/>
            <person name="Corton C."/>
            <person name="Cronin A."/>
            <person name="Doggett J."/>
            <person name="Dowd L."/>
            <person name="Feltwell T."/>
            <person name="Hance Z."/>
            <person name="Harris B."/>
            <person name="Hauser H."/>
            <person name="Holroyd S."/>
            <person name="Jagels K."/>
            <person name="James K.D."/>
            <person name="Lennard N."/>
            <person name="Line A."/>
            <person name="Mayes R."/>
            <person name="Moule S."/>
            <person name="Mungall K."/>
            <person name="Ormond D."/>
            <person name="Quail M.A."/>
            <person name="Rabbinowitsch E."/>
            <person name="Rutherford K.M."/>
            <person name="Sanders M."/>
            <person name="Sharp S."/>
            <person name="Simmonds M."/>
            <person name="Stevens K."/>
            <person name="Whitehead S."/>
            <person name="Barrell B.G."/>
            <person name="Spratt B.G."/>
            <person name="Parkhill J."/>
        </authorList>
    </citation>
    <scope>NUCLEOTIDE SEQUENCE [LARGE SCALE GENOMIC DNA]</scope>
    <source>
        <strain>MRSA252</strain>
    </source>
</reference>
<keyword id="KW-1003">Cell membrane</keyword>
<keyword id="KW-0133">Cell shape</keyword>
<keyword id="KW-0961">Cell wall biogenesis/degradation</keyword>
<keyword id="KW-0328">Glycosyltransferase</keyword>
<keyword id="KW-0472">Membrane</keyword>
<keyword id="KW-0573">Peptidoglycan synthesis</keyword>
<keyword id="KW-0808">Transferase</keyword>
<keyword id="KW-0812">Transmembrane</keyword>
<keyword id="KW-1133">Transmembrane helix</keyword>
<sequence length="269" mass="31460">MKRSDRYSNSNEHFEHMKHEPHYNTYYQPVGKPPKKKKSKRILLKILLTILIIIALFIGIMYFLSTRDNVDELRKIENKSSFVSADNMPEYVKGAFISMEDERFYNHHGFDLKGTTRALFSTISDRDVQGGSTITQQVVKNYFYDNDRSFTRKVKELFVAHRVEKQYNKNEILSFYLNNIYFGDNQYTLEGAANHYFGTTVNKNSTTMSHITVLQSAILASKVNAPSVYNINNMSENFTQRVSTNLEKMKQQNYINETQYQQAMSQLNR</sequence>
<feature type="chain" id="PRO_0000083156" description="Monofunctional glycosyltransferase">
    <location>
        <begin position="1"/>
        <end position="269"/>
    </location>
</feature>
<feature type="transmembrane region" description="Helical" evidence="1">
    <location>
        <begin position="46"/>
        <end position="66"/>
    </location>
</feature>
<organism>
    <name type="scientific">Staphylococcus aureus (strain MRSA252)</name>
    <dbReference type="NCBI Taxonomy" id="282458"/>
    <lineage>
        <taxon>Bacteria</taxon>
        <taxon>Bacillati</taxon>
        <taxon>Bacillota</taxon>
        <taxon>Bacilli</taxon>
        <taxon>Bacillales</taxon>
        <taxon>Staphylococcaceae</taxon>
        <taxon>Staphylococcus</taxon>
    </lineage>
</organism>
<dbReference type="EC" id="2.4.99.28" evidence="1"/>
<dbReference type="EMBL" id="BX571856">
    <property type="protein sequence ID" value="CAG40951.1"/>
    <property type="molecule type" value="Genomic_DNA"/>
</dbReference>
<dbReference type="SMR" id="Q6GFI3"/>
<dbReference type="CAZy" id="GT51">
    <property type="family name" value="Glycosyltransferase Family 51"/>
</dbReference>
<dbReference type="KEGG" id="sar:SAR1964"/>
<dbReference type="HOGENOM" id="CLU_006354_1_2_9"/>
<dbReference type="UniPathway" id="UPA00219"/>
<dbReference type="Proteomes" id="UP000000596">
    <property type="component" value="Chromosome"/>
</dbReference>
<dbReference type="GO" id="GO:0030288">
    <property type="term" value="C:outer membrane-bounded periplasmic space"/>
    <property type="evidence" value="ECO:0007669"/>
    <property type="project" value="TreeGrafter"/>
</dbReference>
<dbReference type="GO" id="GO:0005886">
    <property type="term" value="C:plasma membrane"/>
    <property type="evidence" value="ECO:0007669"/>
    <property type="project" value="UniProtKB-SubCell"/>
</dbReference>
<dbReference type="GO" id="GO:0008955">
    <property type="term" value="F:peptidoglycan glycosyltransferase activity"/>
    <property type="evidence" value="ECO:0007669"/>
    <property type="project" value="UniProtKB-UniRule"/>
</dbReference>
<dbReference type="GO" id="GO:0071555">
    <property type="term" value="P:cell wall organization"/>
    <property type="evidence" value="ECO:0007669"/>
    <property type="project" value="UniProtKB-KW"/>
</dbReference>
<dbReference type="GO" id="GO:0009252">
    <property type="term" value="P:peptidoglycan biosynthetic process"/>
    <property type="evidence" value="ECO:0007669"/>
    <property type="project" value="UniProtKB-UniRule"/>
</dbReference>
<dbReference type="GO" id="GO:0008360">
    <property type="term" value="P:regulation of cell shape"/>
    <property type="evidence" value="ECO:0007669"/>
    <property type="project" value="UniProtKB-KW"/>
</dbReference>
<dbReference type="Gene3D" id="1.10.3810.10">
    <property type="entry name" value="Biosynthetic peptidoglycan transglycosylase-like"/>
    <property type="match status" value="1"/>
</dbReference>
<dbReference type="HAMAP" id="MF_01434">
    <property type="entry name" value="MGT"/>
    <property type="match status" value="1"/>
</dbReference>
<dbReference type="InterPro" id="IPR001264">
    <property type="entry name" value="Glyco_trans_51"/>
</dbReference>
<dbReference type="InterPro" id="IPR050396">
    <property type="entry name" value="Glycosyltr_51/Transpeptidase"/>
</dbReference>
<dbReference type="InterPro" id="IPR023346">
    <property type="entry name" value="Lysozyme-like_dom_sf"/>
</dbReference>
<dbReference type="InterPro" id="IPR022978">
    <property type="entry name" value="Monofunct_glyco_trans"/>
</dbReference>
<dbReference type="InterPro" id="IPR036950">
    <property type="entry name" value="PBP_transglycosylase"/>
</dbReference>
<dbReference type="NCBIfam" id="NF010008">
    <property type="entry name" value="PRK13481.1"/>
    <property type="match status" value="1"/>
</dbReference>
<dbReference type="PANTHER" id="PTHR32282">
    <property type="entry name" value="BINDING PROTEIN TRANSPEPTIDASE, PUTATIVE-RELATED"/>
    <property type="match status" value="1"/>
</dbReference>
<dbReference type="PANTHER" id="PTHR32282:SF11">
    <property type="entry name" value="PENICILLIN-BINDING PROTEIN 1B"/>
    <property type="match status" value="1"/>
</dbReference>
<dbReference type="Pfam" id="PF00912">
    <property type="entry name" value="Transgly"/>
    <property type="match status" value="1"/>
</dbReference>
<dbReference type="SUPFAM" id="SSF53955">
    <property type="entry name" value="Lysozyme-like"/>
    <property type="match status" value="1"/>
</dbReference>
<evidence type="ECO:0000255" key="1">
    <source>
        <dbReference type="HAMAP-Rule" id="MF_01434"/>
    </source>
</evidence>
<name>MGT_STAAR</name>
<proteinExistence type="inferred from homology"/>
<accession>Q6GFI3</accession>
<gene>
    <name evidence="1" type="primary">mgt</name>
    <name type="ordered locus">SAR1964</name>
</gene>
<comment type="function">
    <text evidence="1">Peptidoglycan polymerase that catalyzes glycan chain elongation using lipid-linked disaccharide-pentapeptide as the substrate.</text>
</comment>
<comment type="catalytic activity">
    <reaction evidence="1">
        <text>[GlcNAc-(1-&gt;4)-Mur2Ac(oyl-L-Ala-gamma-D-Glu-L-Lys-D-Ala-D-Ala)](n)-di-trans,octa-cis-undecaprenyl diphosphate + beta-D-GlcNAc-(1-&gt;4)-Mur2Ac(oyl-L-Ala-gamma-D-Glu-L-Lys-D-Ala-D-Ala)-di-trans,octa-cis-undecaprenyl diphosphate = [GlcNAc-(1-&gt;4)-Mur2Ac(oyl-L-Ala-gamma-D-Glu-L-Lys-D-Ala-D-Ala)](n+1)-di-trans,octa-cis-undecaprenyl diphosphate + di-trans,octa-cis-undecaprenyl diphosphate + H(+)</text>
        <dbReference type="Rhea" id="RHEA:23708"/>
        <dbReference type="Rhea" id="RHEA-COMP:9602"/>
        <dbReference type="Rhea" id="RHEA-COMP:9603"/>
        <dbReference type="ChEBI" id="CHEBI:15378"/>
        <dbReference type="ChEBI" id="CHEBI:58405"/>
        <dbReference type="ChEBI" id="CHEBI:60033"/>
        <dbReference type="ChEBI" id="CHEBI:78435"/>
        <dbReference type="EC" id="2.4.99.28"/>
    </reaction>
</comment>
<comment type="pathway">
    <text evidence="1">Cell wall biogenesis; peptidoglycan biosynthesis.</text>
</comment>
<comment type="subcellular location">
    <subcellularLocation>
        <location evidence="1">Cell membrane</location>
        <topology evidence="1">Single-pass membrane protein</topology>
    </subcellularLocation>
</comment>
<comment type="similarity">
    <text evidence="1">Belongs to the glycosyltransferase 51 family.</text>
</comment>